<gene>
    <name evidence="1" type="primary">murB</name>
    <name type="ordered locus">TTE1836</name>
</gene>
<reference key="1">
    <citation type="journal article" date="2002" name="Genome Res.">
        <title>A complete sequence of the T. tengcongensis genome.</title>
        <authorList>
            <person name="Bao Q."/>
            <person name="Tian Y."/>
            <person name="Li W."/>
            <person name="Xu Z."/>
            <person name="Xuan Z."/>
            <person name="Hu S."/>
            <person name="Dong W."/>
            <person name="Yang J."/>
            <person name="Chen Y."/>
            <person name="Xue Y."/>
            <person name="Xu Y."/>
            <person name="Lai X."/>
            <person name="Huang L."/>
            <person name="Dong X."/>
            <person name="Ma Y."/>
            <person name="Ling L."/>
            <person name="Tan H."/>
            <person name="Chen R."/>
            <person name="Wang J."/>
            <person name="Yu J."/>
            <person name="Yang H."/>
        </authorList>
    </citation>
    <scope>NUCLEOTIDE SEQUENCE [LARGE SCALE GENOMIC DNA]</scope>
    <source>
        <strain>DSM 15242 / JCM 11007 / NBRC 100824 / MB4</strain>
    </source>
</reference>
<name>MURB_CALS4</name>
<keyword id="KW-0131">Cell cycle</keyword>
<keyword id="KW-0132">Cell division</keyword>
<keyword id="KW-0133">Cell shape</keyword>
<keyword id="KW-0961">Cell wall biogenesis/degradation</keyword>
<keyword id="KW-0963">Cytoplasm</keyword>
<keyword id="KW-0274">FAD</keyword>
<keyword id="KW-0285">Flavoprotein</keyword>
<keyword id="KW-0521">NADP</keyword>
<keyword id="KW-0560">Oxidoreductase</keyword>
<keyword id="KW-0573">Peptidoglycan synthesis</keyword>
<keyword id="KW-1185">Reference proteome</keyword>
<proteinExistence type="inferred from homology"/>
<organism>
    <name type="scientific">Caldanaerobacter subterraneus subsp. tengcongensis (strain DSM 15242 / JCM 11007 / NBRC 100824 / MB4)</name>
    <name type="common">Thermoanaerobacter tengcongensis</name>
    <dbReference type="NCBI Taxonomy" id="273068"/>
    <lineage>
        <taxon>Bacteria</taxon>
        <taxon>Bacillati</taxon>
        <taxon>Bacillota</taxon>
        <taxon>Clostridia</taxon>
        <taxon>Thermoanaerobacterales</taxon>
        <taxon>Thermoanaerobacteraceae</taxon>
        <taxon>Caldanaerobacter</taxon>
    </lineage>
</organism>
<comment type="function">
    <text evidence="1">Cell wall formation.</text>
</comment>
<comment type="catalytic activity">
    <reaction evidence="1">
        <text>UDP-N-acetyl-alpha-D-muramate + NADP(+) = UDP-N-acetyl-3-O-(1-carboxyvinyl)-alpha-D-glucosamine + NADPH + H(+)</text>
        <dbReference type="Rhea" id="RHEA:12248"/>
        <dbReference type="ChEBI" id="CHEBI:15378"/>
        <dbReference type="ChEBI" id="CHEBI:57783"/>
        <dbReference type="ChEBI" id="CHEBI:58349"/>
        <dbReference type="ChEBI" id="CHEBI:68483"/>
        <dbReference type="ChEBI" id="CHEBI:70757"/>
        <dbReference type="EC" id="1.3.1.98"/>
    </reaction>
</comment>
<comment type="cofactor">
    <cofactor evidence="1">
        <name>FAD</name>
        <dbReference type="ChEBI" id="CHEBI:57692"/>
    </cofactor>
</comment>
<comment type="pathway">
    <text evidence="1">Cell wall biogenesis; peptidoglycan biosynthesis.</text>
</comment>
<comment type="subcellular location">
    <subcellularLocation>
        <location evidence="1">Cytoplasm</location>
    </subcellularLocation>
</comment>
<comment type="similarity">
    <text evidence="1">Belongs to the MurB family.</text>
</comment>
<protein>
    <recommendedName>
        <fullName evidence="1">UDP-N-acetylenolpyruvoylglucosamine reductase</fullName>
        <ecNumber evidence="1">1.3.1.98</ecNumber>
    </recommendedName>
    <alternativeName>
        <fullName evidence="1">UDP-N-acetylmuramate dehydrogenase</fullName>
    </alternativeName>
</protein>
<evidence type="ECO:0000255" key="1">
    <source>
        <dbReference type="HAMAP-Rule" id="MF_00037"/>
    </source>
</evidence>
<feature type="chain" id="PRO_0000179281" description="UDP-N-acetylenolpyruvoylglucosamine reductase">
    <location>
        <begin position="1"/>
        <end position="302"/>
    </location>
</feature>
<feature type="domain" description="FAD-binding PCMH-type" evidence="1">
    <location>
        <begin position="31"/>
        <end position="196"/>
    </location>
</feature>
<feature type="active site" evidence="1">
    <location>
        <position position="175"/>
    </location>
</feature>
<feature type="active site" description="Proton donor" evidence="1">
    <location>
        <position position="225"/>
    </location>
</feature>
<feature type="active site" evidence="1">
    <location>
        <position position="295"/>
    </location>
</feature>
<dbReference type="EC" id="1.3.1.98" evidence="1"/>
<dbReference type="EMBL" id="AE008691">
    <property type="protein sequence ID" value="AAM25027.1"/>
    <property type="molecule type" value="Genomic_DNA"/>
</dbReference>
<dbReference type="RefSeq" id="WP_011026016.1">
    <property type="nucleotide sequence ID" value="NC_003869.1"/>
</dbReference>
<dbReference type="SMR" id="Q8R8Z6"/>
<dbReference type="STRING" id="273068.TTE1836"/>
<dbReference type="KEGG" id="tte:TTE1836"/>
<dbReference type="eggNOG" id="COG0812">
    <property type="taxonomic scope" value="Bacteria"/>
</dbReference>
<dbReference type="HOGENOM" id="CLU_035304_1_1_9"/>
<dbReference type="OrthoDB" id="9804753at2"/>
<dbReference type="UniPathway" id="UPA00219"/>
<dbReference type="Proteomes" id="UP000000555">
    <property type="component" value="Chromosome"/>
</dbReference>
<dbReference type="GO" id="GO:0005829">
    <property type="term" value="C:cytosol"/>
    <property type="evidence" value="ECO:0007669"/>
    <property type="project" value="TreeGrafter"/>
</dbReference>
<dbReference type="GO" id="GO:0071949">
    <property type="term" value="F:FAD binding"/>
    <property type="evidence" value="ECO:0007669"/>
    <property type="project" value="InterPro"/>
</dbReference>
<dbReference type="GO" id="GO:0008762">
    <property type="term" value="F:UDP-N-acetylmuramate dehydrogenase activity"/>
    <property type="evidence" value="ECO:0007669"/>
    <property type="project" value="UniProtKB-UniRule"/>
</dbReference>
<dbReference type="GO" id="GO:0051301">
    <property type="term" value="P:cell division"/>
    <property type="evidence" value="ECO:0007669"/>
    <property type="project" value="UniProtKB-KW"/>
</dbReference>
<dbReference type="GO" id="GO:0071555">
    <property type="term" value="P:cell wall organization"/>
    <property type="evidence" value="ECO:0007669"/>
    <property type="project" value="UniProtKB-KW"/>
</dbReference>
<dbReference type="GO" id="GO:0009252">
    <property type="term" value="P:peptidoglycan biosynthetic process"/>
    <property type="evidence" value="ECO:0007669"/>
    <property type="project" value="UniProtKB-UniRule"/>
</dbReference>
<dbReference type="GO" id="GO:0008360">
    <property type="term" value="P:regulation of cell shape"/>
    <property type="evidence" value="ECO:0007669"/>
    <property type="project" value="UniProtKB-KW"/>
</dbReference>
<dbReference type="Gene3D" id="3.30.465.10">
    <property type="match status" value="1"/>
</dbReference>
<dbReference type="Gene3D" id="3.90.78.10">
    <property type="entry name" value="UDP-N-acetylenolpyruvoylglucosamine reductase, C-terminal domain"/>
    <property type="match status" value="1"/>
</dbReference>
<dbReference type="Gene3D" id="3.30.43.10">
    <property type="entry name" value="Uridine Diphospho-n-acetylenolpyruvylglucosamine Reductase, domain 2"/>
    <property type="match status" value="1"/>
</dbReference>
<dbReference type="HAMAP" id="MF_00037">
    <property type="entry name" value="MurB"/>
    <property type="match status" value="1"/>
</dbReference>
<dbReference type="InterPro" id="IPR016166">
    <property type="entry name" value="FAD-bd_PCMH"/>
</dbReference>
<dbReference type="InterPro" id="IPR036318">
    <property type="entry name" value="FAD-bd_PCMH-like_sf"/>
</dbReference>
<dbReference type="InterPro" id="IPR016167">
    <property type="entry name" value="FAD-bd_PCMH_sub1"/>
</dbReference>
<dbReference type="InterPro" id="IPR016169">
    <property type="entry name" value="FAD-bd_PCMH_sub2"/>
</dbReference>
<dbReference type="InterPro" id="IPR003170">
    <property type="entry name" value="MurB"/>
</dbReference>
<dbReference type="InterPro" id="IPR011601">
    <property type="entry name" value="MurB_C"/>
</dbReference>
<dbReference type="InterPro" id="IPR036635">
    <property type="entry name" value="MurB_C_sf"/>
</dbReference>
<dbReference type="InterPro" id="IPR006094">
    <property type="entry name" value="Oxid_FAD_bind_N"/>
</dbReference>
<dbReference type="NCBIfam" id="TIGR00179">
    <property type="entry name" value="murB"/>
    <property type="match status" value="1"/>
</dbReference>
<dbReference type="NCBIfam" id="NF010480">
    <property type="entry name" value="PRK13905.1"/>
    <property type="match status" value="1"/>
</dbReference>
<dbReference type="PANTHER" id="PTHR21071">
    <property type="entry name" value="UDP-N-ACETYLENOLPYRUVOYLGLUCOSAMINE REDUCTASE"/>
    <property type="match status" value="1"/>
</dbReference>
<dbReference type="PANTHER" id="PTHR21071:SF4">
    <property type="entry name" value="UDP-N-ACETYLENOLPYRUVOYLGLUCOSAMINE REDUCTASE"/>
    <property type="match status" value="1"/>
</dbReference>
<dbReference type="Pfam" id="PF01565">
    <property type="entry name" value="FAD_binding_4"/>
    <property type="match status" value="1"/>
</dbReference>
<dbReference type="Pfam" id="PF02873">
    <property type="entry name" value="MurB_C"/>
    <property type="match status" value="1"/>
</dbReference>
<dbReference type="SUPFAM" id="SSF56176">
    <property type="entry name" value="FAD-binding/transporter-associated domain-like"/>
    <property type="match status" value="1"/>
</dbReference>
<dbReference type="SUPFAM" id="SSF56194">
    <property type="entry name" value="Uridine diphospho-N-Acetylenolpyruvylglucosamine reductase, MurB, C-terminal domain"/>
    <property type="match status" value="1"/>
</dbReference>
<dbReference type="PROSITE" id="PS51387">
    <property type="entry name" value="FAD_PCMH"/>
    <property type="match status" value="1"/>
</dbReference>
<accession>Q8R8Z6</accession>
<sequence>MAEILVDKLKEILKEGKLYLNEPMKRHTSFKIGGPADVLAVPGSRDELINLIAYLRQEKIPFFILGNGTNLLVSEKGIRGVVVKLSSLRNVIVEGTKIIAEAGASLSYIANVALVHELTGFEFASGIPGTLGGAIVMNAGAYGSEMKDVVEKVEVLDENNNILILSNQEMKFSYRYSILQEKEWIVLRAWISLERGNYEEIKKKMEELNQRRKEKQPLDYPSAGSTFKRPPGYYAGKLIEDAGLKGYSIGGAKVSEKHSGFIINTGNATFYDVLNLIEYIQKVVKEKFGVELMPEIKIVGEK</sequence>